<protein>
    <recommendedName>
        <fullName>Zinc finger protein 34</fullName>
    </recommendedName>
    <alternativeName>
        <fullName>Zinc finger protein KOX32</fullName>
    </alternativeName>
</protein>
<evidence type="ECO:0000255" key="1">
    <source>
        <dbReference type="PROSITE-ProRule" id="PRU00042"/>
    </source>
</evidence>
<evidence type="ECO:0000255" key="2">
    <source>
        <dbReference type="PROSITE-ProRule" id="PRU00119"/>
    </source>
</evidence>
<evidence type="ECO:0000256" key="3">
    <source>
        <dbReference type="SAM" id="MobiDB-lite"/>
    </source>
</evidence>
<evidence type="ECO:0000305" key="4"/>
<evidence type="ECO:0007744" key="5">
    <source>
    </source>
</evidence>
<evidence type="ECO:0007744" key="6">
    <source>
    </source>
</evidence>
<gene>
    <name type="primary">ZNF34</name>
    <name type="synonym">KOX32</name>
</gene>
<feature type="chain" id="PRO_0000047365" description="Zinc finger protein 34">
    <location>
        <begin position="1"/>
        <end position="560"/>
    </location>
</feature>
<feature type="domain" description="KRAB" evidence="2">
    <location>
        <begin position="35"/>
        <end position="108"/>
    </location>
</feature>
<feature type="zinc finger region" description="C2H2-type 1" evidence="1">
    <location>
        <begin position="195"/>
        <end position="217"/>
    </location>
</feature>
<feature type="zinc finger region" description="C2H2-type 2" evidence="1">
    <location>
        <begin position="251"/>
        <end position="273"/>
    </location>
</feature>
<feature type="zinc finger region" description="C2H2-type 3" evidence="1">
    <location>
        <begin position="279"/>
        <end position="301"/>
    </location>
</feature>
<feature type="zinc finger region" description="C2H2-type 4" evidence="1">
    <location>
        <begin position="307"/>
        <end position="329"/>
    </location>
</feature>
<feature type="zinc finger region" description="C2H2-type 5" evidence="1">
    <location>
        <begin position="335"/>
        <end position="357"/>
    </location>
</feature>
<feature type="zinc finger region" description="C2H2-type 6" evidence="1">
    <location>
        <begin position="363"/>
        <end position="385"/>
    </location>
</feature>
<feature type="zinc finger region" description="C2H2-type 7" evidence="1">
    <location>
        <begin position="391"/>
        <end position="413"/>
    </location>
</feature>
<feature type="zinc finger region" description="C2H2-type 8" evidence="1">
    <location>
        <begin position="419"/>
        <end position="441"/>
    </location>
</feature>
<feature type="zinc finger region" description="C2H2-type 9" evidence="1">
    <location>
        <begin position="447"/>
        <end position="469"/>
    </location>
</feature>
<feature type="zinc finger region" description="C2H2-type 10" evidence="1">
    <location>
        <begin position="475"/>
        <end position="497"/>
    </location>
</feature>
<feature type="zinc finger region" description="C2H2-type 11" evidence="1">
    <location>
        <begin position="503"/>
        <end position="525"/>
    </location>
</feature>
<feature type="zinc finger region" description="C2H2-type 12" evidence="1">
    <location>
        <begin position="531"/>
        <end position="553"/>
    </location>
</feature>
<feature type="region of interest" description="Disordered" evidence="3">
    <location>
        <begin position="163"/>
        <end position="188"/>
    </location>
</feature>
<feature type="modified residue" description="Phosphoserine" evidence="5 6">
    <location>
        <position position="113"/>
    </location>
</feature>
<name>ZNF34_HUMAN</name>
<comment type="function">
    <text>May be involved in transcriptional regulation.</text>
</comment>
<comment type="interaction">
    <interactant intactId="EBI-10264496">
        <id>Q8IZ26</id>
    </interactant>
    <interactant intactId="EBI-10172150">
        <id>P60370</id>
        <label>KRTAP10-5</label>
    </interactant>
    <organismsDiffer>false</organismsDiffer>
    <experiments>3</experiments>
</comment>
<comment type="interaction">
    <interactant intactId="EBI-10264496">
        <id>Q8IZ26</id>
    </interactant>
    <interactant intactId="EBI-2107455">
        <id>Q08AM6</id>
        <label>VAC14</label>
    </interactant>
    <organismsDiffer>false</organismsDiffer>
    <experiments>4</experiments>
</comment>
<comment type="subcellular location">
    <subcellularLocation>
        <location evidence="4">Nucleus</location>
    </subcellularLocation>
</comment>
<comment type="similarity">
    <text evidence="4">Belongs to the krueppel C2H2-type zinc-finger protein family.</text>
</comment>
<comment type="sequence caution" evidence="4">
    <conflict type="erroneous initiation">
        <sequence resource="EMBL-CDS" id="AAH04480"/>
    </conflict>
    <text>Truncated N-terminus.</text>
</comment>
<comment type="sequence caution" evidence="4">
    <conflict type="miscellaneous discrepancy">
        <sequence resource="EMBL-CDS" id="AAH28136"/>
    </conflict>
    <text>Codon in position 67 corresponds to a stop codon in genome.</text>
</comment>
<keyword id="KW-0238">DNA-binding</keyword>
<keyword id="KW-0479">Metal-binding</keyword>
<keyword id="KW-0539">Nucleus</keyword>
<keyword id="KW-0597">Phosphoprotein</keyword>
<keyword id="KW-1267">Proteomics identification</keyword>
<keyword id="KW-1185">Reference proteome</keyword>
<keyword id="KW-0677">Repeat</keyword>
<keyword id="KW-0804">Transcription</keyword>
<keyword id="KW-0805">Transcription regulation</keyword>
<keyword id="KW-0862">Zinc</keyword>
<keyword id="KW-0863">Zinc-finger</keyword>
<proteinExistence type="evidence at protein level"/>
<dbReference type="EMBL" id="AL833814">
    <property type="protein sequence ID" value="CAD38677.1"/>
    <property type="molecule type" value="mRNA"/>
</dbReference>
<dbReference type="EMBL" id="CH471162">
    <property type="protein sequence ID" value="EAW82055.1"/>
    <property type="molecule type" value="Genomic_DNA"/>
</dbReference>
<dbReference type="EMBL" id="CH471162">
    <property type="protein sequence ID" value="EAW82056.1"/>
    <property type="molecule type" value="Genomic_DNA"/>
</dbReference>
<dbReference type="EMBL" id="BC004480">
    <property type="protein sequence ID" value="AAH04480.1"/>
    <property type="status" value="ALT_INIT"/>
    <property type="molecule type" value="mRNA"/>
</dbReference>
<dbReference type="EMBL" id="BC028136">
    <property type="protein sequence ID" value="AAH28136.1"/>
    <property type="status" value="ALT_SEQ"/>
    <property type="molecule type" value="mRNA"/>
</dbReference>
<dbReference type="CCDS" id="CCDS47945.1"/>
<dbReference type="RefSeq" id="NP_001273698.1">
    <property type="nucleotide sequence ID" value="NM_001286769.1"/>
</dbReference>
<dbReference type="RefSeq" id="NP_085057.3">
    <property type="nucleotide sequence ID" value="NM_030580.4"/>
</dbReference>
<dbReference type="RefSeq" id="XP_011515616.1">
    <property type="nucleotide sequence ID" value="XM_011517314.3"/>
</dbReference>
<dbReference type="RefSeq" id="XP_011515617.1">
    <property type="nucleotide sequence ID" value="XM_011517315.2"/>
</dbReference>
<dbReference type="RefSeq" id="XP_011515618.1">
    <property type="nucleotide sequence ID" value="XM_011517316.2"/>
</dbReference>
<dbReference type="RefSeq" id="XP_011515620.1">
    <property type="nucleotide sequence ID" value="XM_011517318.2"/>
</dbReference>
<dbReference type="RefSeq" id="XP_016869361.1">
    <property type="nucleotide sequence ID" value="XM_017013872.1"/>
</dbReference>
<dbReference type="RefSeq" id="XP_016869362.1">
    <property type="nucleotide sequence ID" value="XM_017013873.1"/>
</dbReference>
<dbReference type="RefSeq" id="XP_016869363.1">
    <property type="nucleotide sequence ID" value="XM_017013874.2"/>
</dbReference>
<dbReference type="RefSeq" id="XP_016869364.1">
    <property type="nucleotide sequence ID" value="XM_017013875.1"/>
</dbReference>
<dbReference type="RefSeq" id="XP_047278225.1">
    <property type="nucleotide sequence ID" value="XM_047422269.1"/>
</dbReference>
<dbReference type="RefSeq" id="XP_047278226.1">
    <property type="nucleotide sequence ID" value="XM_047422270.1"/>
</dbReference>
<dbReference type="RefSeq" id="XP_047278227.1">
    <property type="nucleotide sequence ID" value="XM_047422271.1"/>
</dbReference>
<dbReference type="RefSeq" id="XP_047278228.1">
    <property type="nucleotide sequence ID" value="XM_047422272.1"/>
</dbReference>
<dbReference type="RefSeq" id="XP_047278229.1">
    <property type="nucleotide sequence ID" value="XM_047422273.1"/>
</dbReference>
<dbReference type="RefSeq" id="XP_054217269.1">
    <property type="nucleotide sequence ID" value="XM_054361294.1"/>
</dbReference>
<dbReference type="RefSeq" id="XP_054217270.1">
    <property type="nucleotide sequence ID" value="XM_054361295.1"/>
</dbReference>
<dbReference type="RefSeq" id="XP_054217271.1">
    <property type="nucleotide sequence ID" value="XM_054361296.1"/>
</dbReference>
<dbReference type="SMR" id="Q8IZ26"/>
<dbReference type="BioGRID" id="123310">
    <property type="interactions" value="55"/>
</dbReference>
<dbReference type="FunCoup" id="Q8IZ26">
    <property type="interactions" value="946"/>
</dbReference>
<dbReference type="IntAct" id="Q8IZ26">
    <property type="interactions" value="11"/>
</dbReference>
<dbReference type="STRING" id="9606.ENSP00000341528"/>
<dbReference type="GlyGen" id="Q8IZ26">
    <property type="glycosylation" value="1 site, 1 O-linked glycan (1 site)"/>
</dbReference>
<dbReference type="iPTMnet" id="Q8IZ26"/>
<dbReference type="PhosphoSitePlus" id="Q8IZ26"/>
<dbReference type="BioMuta" id="ZNF34"/>
<dbReference type="DMDM" id="317373492"/>
<dbReference type="jPOST" id="Q8IZ26"/>
<dbReference type="MassIVE" id="Q8IZ26"/>
<dbReference type="PaxDb" id="9606-ENSP00000341528"/>
<dbReference type="PeptideAtlas" id="Q8IZ26"/>
<dbReference type="ProteomicsDB" id="71275"/>
<dbReference type="Antibodypedia" id="28631">
    <property type="antibodies" value="120 antibodies from 17 providers"/>
</dbReference>
<dbReference type="DNASU" id="80778"/>
<dbReference type="Ensembl" id="ENST00000343459.9">
    <property type="protein sequence ID" value="ENSP00000341528.5"/>
    <property type="gene ID" value="ENSG00000196378.14"/>
</dbReference>
<dbReference type="GeneID" id="80778"/>
<dbReference type="KEGG" id="hsa:80778"/>
<dbReference type="UCSC" id="uc003zdx.6">
    <property type="organism name" value="human"/>
</dbReference>
<dbReference type="AGR" id="HGNC:13098"/>
<dbReference type="CTD" id="80778"/>
<dbReference type="DisGeNET" id="80778"/>
<dbReference type="GeneCards" id="ZNF34"/>
<dbReference type="HGNC" id="HGNC:13098">
    <property type="gene designation" value="ZNF34"/>
</dbReference>
<dbReference type="HPA" id="ENSG00000196378">
    <property type="expression patterns" value="Low tissue specificity"/>
</dbReference>
<dbReference type="MIM" id="194526">
    <property type="type" value="gene"/>
</dbReference>
<dbReference type="neXtProt" id="NX_Q8IZ26"/>
<dbReference type="PharmGKB" id="PA37673"/>
<dbReference type="VEuPathDB" id="HostDB:ENSG00000196378"/>
<dbReference type="eggNOG" id="KOG1721">
    <property type="taxonomic scope" value="Eukaryota"/>
</dbReference>
<dbReference type="HOGENOM" id="CLU_002678_0_7_1"/>
<dbReference type="InParanoid" id="Q8IZ26"/>
<dbReference type="OrthoDB" id="9437857at2759"/>
<dbReference type="PAN-GO" id="Q8IZ26">
    <property type="GO annotations" value="4 GO annotations based on evolutionary models"/>
</dbReference>
<dbReference type="PhylomeDB" id="Q8IZ26"/>
<dbReference type="TreeFam" id="TF337055"/>
<dbReference type="PathwayCommons" id="Q8IZ26"/>
<dbReference type="Reactome" id="R-HSA-212436">
    <property type="pathway name" value="Generic Transcription Pathway"/>
</dbReference>
<dbReference type="SignaLink" id="Q8IZ26"/>
<dbReference type="BioGRID-ORCS" id="80778">
    <property type="hits" value="20 hits in 1177 CRISPR screens"/>
</dbReference>
<dbReference type="ChiTaRS" id="ZNF34">
    <property type="organism name" value="human"/>
</dbReference>
<dbReference type="GeneWiki" id="ZNF34"/>
<dbReference type="GenomeRNAi" id="80778"/>
<dbReference type="Pharos" id="Q8IZ26">
    <property type="development level" value="Tdark"/>
</dbReference>
<dbReference type="PRO" id="PR:Q8IZ26"/>
<dbReference type="Proteomes" id="UP000005640">
    <property type="component" value="Chromosome 8"/>
</dbReference>
<dbReference type="RNAct" id="Q8IZ26">
    <property type="molecule type" value="protein"/>
</dbReference>
<dbReference type="Bgee" id="ENSG00000196378">
    <property type="expression patterns" value="Expressed in tibial artery and 128 other cell types or tissues"/>
</dbReference>
<dbReference type="ExpressionAtlas" id="Q8IZ26">
    <property type="expression patterns" value="baseline and differential"/>
</dbReference>
<dbReference type="GO" id="GO:0005829">
    <property type="term" value="C:cytosol"/>
    <property type="evidence" value="ECO:0000314"/>
    <property type="project" value="HPA"/>
</dbReference>
<dbReference type="GO" id="GO:0005654">
    <property type="term" value="C:nucleoplasm"/>
    <property type="evidence" value="ECO:0000314"/>
    <property type="project" value="HPA"/>
</dbReference>
<dbReference type="GO" id="GO:0005634">
    <property type="term" value="C:nucleus"/>
    <property type="evidence" value="ECO:0000318"/>
    <property type="project" value="GO_Central"/>
</dbReference>
<dbReference type="GO" id="GO:0000981">
    <property type="term" value="F:DNA-binding transcription factor activity, RNA polymerase II-specific"/>
    <property type="evidence" value="ECO:0000318"/>
    <property type="project" value="GO_Central"/>
</dbReference>
<dbReference type="GO" id="GO:0000978">
    <property type="term" value="F:RNA polymerase II cis-regulatory region sequence-specific DNA binding"/>
    <property type="evidence" value="ECO:0000318"/>
    <property type="project" value="GO_Central"/>
</dbReference>
<dbReference type="GO" id="GO:0008270">
    <property type="term" value="F:zinc ion binding"/>
    <property type="evidence" value="ECO:0007669"/>
    <property type="project" value="UniProtKB-KW"/>
</dbReference>
<dbReference type="GO" id="GO:0006357">
    <property type="term" value="P:regulation of transcription by RNA polymerase II"/>
    <property type="evidence" value="ECO:0000318"/>
    <property type="project" value="GO_Central"/>
</dbReference>
<dbReference type="CDD" id="cd07765">
    <property type="entry name" value="KRAB_A-box"/>
    <property type="match status" value="1"/>
</dbReference>
<dbReference type="FunFam" id="3.30.160.60:FF:004399">
    <property type="match status" value="1"/>
</dbReference>
<dbReference type="FunFam" id="3.30.160.60:FF:002343">
    <property type="entry name" value="Zinc finger protein 33A"/>
    <property type="match status" value="2"/>
</dbReference>
<dbReference type="FunFam" id="3.30.160.60:FF:001961">
    <property type="entry name" value="Zinc finger protein 34"/>
    <property type="match status" value="1"/>
</dbReference>
<dbReference type="FunFam" id="3.30.160.60:FF:001025">
    <property type="entry name" value="zinc finger protein 34"/>
    <property type="match status" value="1"/>
</dbReference>
<dbReference type="FunFam" id="3.30.160.60:FF:000730">
    <property type="entry name" value="zinc finger protein 34 isoform X1"/>
    <property type="match status" value="2"/>
</dbReference>
<dbReference type="FunFam" id="3.30.160.60:FF:000016">
    <property type="entry name" value="zinc finger protein 37 homolog"/>
    <property type="match status" value="1"/>
</dbReference>
<dbReference type="FunFam" id="3.30.160.60:FF:000023">
    <property type="entry name" value="zinc finger protein 37 homolog"/>
    <property type="match status" value="1"/>
</dbReference>
<dbReference type="FunFam" id="3.30.160.60:FF:000737">
    <property type="entry name" value="Zinc finger protein 565"/>
    <property type="match status" value="2"/>
</dbReference>
<dbReference type="FunFam" id="3.30.160.60:FF:000427">
    <property type="entry name" value="Zinc finger with KRAB and SCAN domains 7"/>
    <property type="match status" value="1"/>
</dbReference>
<dbReference type="Gene3D" id="6.10.140.140">
    <property type="match status" value="1"/>
</dbReference>
<dbReference type="Gene3D" id="3.30.160.60">
    <property type="entry name" value="Classic Zinc Finger"/>
    <property type="match status" value="12"/>
</dbReference>
<dbReference type="InterPro" id="IPR050589">
    <property type="entry name" value="Ikaros_C2H2-ZF"/>
</dbReference>
<dbReference type="InterPro" id="IPR001909">
    <property type="entry name" value="KRAB"/>
</dbReference>
<dbReference type="InterPro" id="IPR036051">
    <property type="entry name" value="KRAB_dom_sf"/>
</dbReference>
<dbReference type="InterPro" id="IPR036236">
    <property type="entry name" value="Znf_C2H2_sf"/>
</dbReference>
<dbReference type="InterPro" id="IPR013087">
    <property type="entry name" value="Znf_C2H2_type"/>
</dbReference>
<dbReference type="PANTHER" id="PTHR24404">
    <property type="entry name" value="ZINC FINGER PROTEIN"/>
    <property type="match status" value="1"/>
</dbReference>
<dbReference type="PANTHER" id="PTHR24404:SF100">
    <property type="entry name" value="ZINC FINGER PROTEIN 501"/>
    <property type="match status" value="1"/>
</dbReference>
<dbReference type="Pfam" id="PF01352">
    <property type="entry name" value="KRAB"/>
    <property type="match status" value="1"/>
</dbReference>
<dbReference type="Pfam" id="PF00096">
    <property type="entry name" value="zf-C2H2"/>
    <property type="match status" value="12"/>
</dbReference>
<dbReference type="SMART" id="SM00349">
    <property type="entry name" value="KRAB"/>
    <property type="match status" value="1"/>
</dbReference>
<dbReference type="SMART" id="SM00355">
    <property type="entry name" value="ZnF_C2H2"/>
    <property type="match status" value="12"/>
</dbReference>
<dbReference type="SUPFAM" id="SSF57667">
    <property type="entry name" value="beta-beta-alpha zinc fingers"/>
    <property type="match status" value="7"/>
</dbReference>
<dbReference type="SUPFAM" id="SSF109640">
    <property type="entry name" value="KRAB domain (Kruppel-associated box)"/>
    <property type="match status" value="1"/>
</dbReference>
<dbReference type="PROSITE" id="PS50805">
    <property type="entry name" value="KRAB"/>
    <property type="match status" value="1"/>
</dbReference>
<dbReference type="PROSITE" id="PS00028">
    <property type="entry name" value="ZINC_FINGER_C2H2_1"/>
    <property type="match status" value="12"/>
</dbReference>
<dbReference type="PROSITE" id="PS50157">
    <property type="entry name" value="ZINC_FINGER_C2H2_2"/>
    <property type="match status" value="12"/>
</dbReference>
<accession>Q8IZ26</accession>
<accession>D3DWN1</accession>
<accession>Q9BSZ0</accession>
<organism>
    <name type="scientific">Homo sapiens</name>
    <name type="common">Human</name>
    <dbReference type="NCBI Taxonomy" id="9606"/>
    <lineage>
        <taxon>Eukaryota</taxon>
        <taxon>Metazoa</taxon>
        <taxon>Chordata</taxon>
        <taxon>Craniata</taxon>
        <taxon>Vertebrata</taxon>
        <taxon>Euteleostomi</taxon>
        <taxon>Mammalia</taxon>
        <taxon>Eutheria</taxon>
        <taxon>Euarchontoglires</taxon>
        <taxon>Primates</taxon>
        <taxon>Haplorrhini</taxon>
        <taxon>Catarrhini</taxon>
        <taxon>Hominidae</taxon>
        <taxon>Homo</taxon>
    </lineage>
</organism>
<sequence>MLLLLSDQLLLTALRKPNPQAMAALFLSAPPQAEVTFEDVAVYLSREEWGRLGPAQRGLYRDVMLETYGNLVSLGVGPAGPKPGVISQLERGDEPWVLDVQGTSGKEHLRVNSPALGTRTEYKELTSQETFGEEDPQGSEPVEACDHISKSEGSLEKLVEQRGPRAVTLTNGESSRESGGNLRLLSRPVPDQRPHKCDICEQSFEQRSYLNNHKRVHRSKKTNTVRNSGEIFSANLVVKEDQKIPTGKKLHYCSYCGKTFRYSANLVKHQRLHTEEKPYKCDECGKAFSQSCEFINHRRMHSGEIPYRCDECGKTFTRRPNLMKHQRIHTGEKPYKCGECGKHFSAYSSLIYHQRIHTGEKPYKCNDCGKAFSDGSILIRHRRTHTGEKPFECKECGKGFTQSSNLIQHQRIHTGEKPYKCNECEKAFIQKTKLVEHQRSHTGEKPYECNDCGKVFSQSTHLIQHQRIHTGEKPYKCSECGKAFHNSSRLIHHQRLHHGEKPYRCSDCKKAFSQSTYLIQHRRIHTGEKPYKCSECGKAFRHSSNMCQHQRIHLREDFSM</sequence>
<reference key="1">
    <citation type="journal article" date="2007" name="BMC Genomics">
        <title>The full-ORF clone resource of the German cDNA consortium.</title>
        <authorList>
            <person name="Bechtel S."/>
            <person name="Rosenfelder H."/>
            <person name="Duda A."/>
            <person name="Schmidt C.P."/>
            <person name="Ernst U."/>
            <person name="Wellenreuther R."/>
            <person name="Mehrle A."/>
            <person name="Schuster C."/>
            <person name="Bahr A."/>
            <person name="Bloecker H."/>
            <person name="Heubner D."/>
            <person name="Hoerlein A."/>
            <person name="Michel G."/>
            <person name="Wedler H."/>
            <person name="Koehrer K."/>
            <person name="Ottenwaelder B."/>
            <person name="Poustka A."/>
            <person name="Wiemann S."/>
            <person name="Schupp I."/>
        </authorList>
    </citation>
    <scope>NUCLEOTIDE SEQUENCE [LARGE SCALE MRNA]</scope>
    <source>
        <tissue>Substantia nigra</tissue>
    </source>
</reference>
<reference key="2">
    <citation type="submission" date="2005-09" db="EMBL/GenBank/DDBJ databases">
        <authorList>
            <person name="Mural R.J."/>
            <person name="Istrail S."/>
            <person name="Sutton G.G."/>
            <person name="Florea L."/>
            <person name="Halpern A.L."/>
            <person name="Mobarry C.M."/>
            <person name="Lippert R."/>
            <person name="Walenz B."/>
            <person name="Shatkay H."/>
            <person name="Dew I."/>
            <person name="Miller J.R."/>
            <person name="Flanigan M.J."/>
            <person name="Edwards N.J."/>
            <person name="Bolanos R."/>
            <person name="Fasulo D."/>
            <person name="Halldorsson B.V."/>
            <person name="Hannenhalli S."/>
            <person name="Turner R."/>
            <person name="Yooseph S."/>
            <person name="Lu F."/>
            <person name="Nusskern D.R."/>
            <person name="Shue B.C."/>
            <person name="Zheng X.H."/>
            <person name="Zhong F."/>
            <person name="Delcher A.L."/>
            <person name="Huson D.H."/>
            <person name="Kravitz S.A."/>
            <person name="Mouchard L."/>
            <person name="Reinert K."/>
            <person name="Remington K.A."/>
            <person name="Clark A.G."/>
            <person name="Waterman M.S."/>
            <person name="Eichler E.E."/>
            <person name="Adams M.D."/>
            <person name="Hunkapiller M.W."/>
            <person name="Myers E.W."/>
            <person name="Venter J.C."/>
        </authorList>
    </citation>
    <scope>NUCLEOTIDE SEQUENCE [LARGE SCALE GENOMIC DNA]</scope>
</reference>
<reference key="3">
    <citation type="journal article" date="2004" name="Genome Res.">
        <title>The status, quality, and expansion of the NIH full-length cDNA project: the Mammalian Gene Collection (MGC).</title>
        <authorList>
            <consortium name="The MGC Project Team"/>
        </authorList>
    </citation>
    <scope>NUCLEOTIDE SEQUENCE [LARGE SCALE MRNA]</scope>
    <source>
        <tissue>Blood</tissue>
        <tissue>Lung</tissue>
    </source>
</reference>
<reference key="4">
    <citation type="journal article" date="2010" name="Sci. Signal.">
        <title>Quantitative phosphoproteomics reveals widespread full phosphorylation site occupancy during mitosis.</title>
        <authorList>
            <person name="Olsen J.V."/>
            <person name="Vermeulen M."/>
            <person name="Santamaria A."/>
            <person name="Kumar C."/>
            <person name="Miller M.L."/>
            <person name="Jensen L.J."/>
            <person name="Gnad F."/>
            <person name="Cox J."/>
            <person name="Jensen T.S."/>
            <person name="Nigg E.A."/>
            <person name="Brunak S."/>
            <person name="Mann M."/>
        </authorList>
    </citation>
    <scope>PHOSPHORYLATION [LARGE SCALE ANALYSIS] AT SER-113</scope>
    <scope>IDENTIFICATION BY MASS SPECTROMETRY [LARGE SCALE ANALYSIS]</scope>
    <source>
        <tissue>Cervix carcinoma</tissue>
    </source>
</reference>
<reference key="5">
    <citation type="journal article" date="2013" name="J. Proteome Res.">
        <title>Toward a comprehensive characterization of a human cancer cell phosphoproteome.</title>
        <authorList>
            <person name="Zhou H."/>
            <person name="Di Palma S."/>
            <person name="Preisinger C."/>
            <person name="Peng M."/>
            <person name="Polat A.N."/>
            <person name="Heck A.J."/>
            <person name="Mohammed S."/>
        </authorList>
    </citation>
    <scope>PHOSPHORYLATION [LARGE SCALE ANALYSIS] AT SER-113</scope>
    <scope>IDENTIFICATION BY MASS SPECTROMETRY [LARGE SCALE ANALYSIS]</scope>
    <source>
        <tissue>Cervix carcinoma</tissue>
    </source>
</reference>